<sequence length="234" mass="27521">MTNERHDELACLGIFPLKNPKQLDGVVTPILQLRVKFLAPTDRWWEGLVINKDLSKEESEELWKFLQSFDPRSAKFVGRGTPEDHVISYLFEAGKYEFEVFFYQKDHSLKLMGLYDKTQKQLLRRDSSGDLTSTDKERDVSPVSHSEKPYWDRYDLDQPSNQDVEESRNLVQEPKHRSKKYDRLGLDELVMEQTASLWKICSRNGMSVDEFLRFIRMGLESNFQHSNQVIPTHF</sequence>
<protein>
    <recommendedName>
        <fullName>Meiotically up-regulated gene 35 protein</fullName>
    </recommendedName>
</protein>
<organism>
    <name type="scientific">Schizosaccharomyces pombe (strain 972 / ATCC 24843)</name>
    <name type="common">Fission yeast</name>
    <dbReference type="NCBI Taxonomy" id="284812"/>
    <lineage>
        <taxon>Eukaryota</taxon>
        <taxon>Fungi</taxon>
        <taxon>Dikarya</taxon>
        <taxon>Ascomycota</taxon>
        <taxon>Taphrinomycotina</taxon>
        <taxon>Schizosaccharomycetes</taxon>
        <taxon>Schizosaccharomycetales</taxon>
        <taxon>Schizosaccharomycetaceae</taxon>
        <taxon>Schizosaccharomyces</taxon>
    </lineage>
</organism>
<accession>O94435</accession>
<accession>Q9P7S0</accession>
<gene>
    <name type="primary">mug35</name>
    <name type="ORF">SPAC22H12.01c</name>
    <name type="ORF">SPAC23G3.13c</name>
</gene>
<reference key="1">
    <citation type="journal article" date="2002" name="Nature">
        <title>The genome sequence of Schizosaccharomyces pombe.</title>
        <authorList>
            <person name="Wood V."/>
            <person name="Gwilliam R."/>
            <person name="Rajandream M.A."/>
            <person name="Lyne M.H."/>
            <person name="Lyne R."/>
            <person name="Stewart A."/>
            <person name="Sgouros J.G."/>
            <person name="Peat N."/>
            <person name="Hayles J."/>
            <person name="Baker S.G."/>
            <person name="Basham D."/>
            <person name="Bowman S."/>
            <person name="Brooks K."/>
            <person name="Brown D."/>
            <person name="Brown S."/>
            <person name="Chillingworth T."/>
            <person name="Churcher C.M."/>
            <person name="Collins M."/>
            <person name="Connor R."/>
            <person name="Cronin A."/>
            <person name="Davis P."/>
            <person name="Feltwell T."/>
            <person name="Fraser A."/>
            <person name="Gentles S."/>
            <person name="Goble A."/>
            <person name="Hamlin N."/>
            <person name="Harris D.E."/>
            <person name="Hidalgo J."/>
            <person name="Hodgson G."/>
            <person name="Holroyd S."/>
            <person name="Hornsby T."/>
            <person name="Howarth S."/>
            <person name="Huckle E.J."/>
            <person name="Hunt S."/>
            <person name="Jagels K."/>
            <person name="James K.D."/>
            <person name="Jones L."/>
            <person name="Jones M."/>
            <person name="Leather S."/>
            <person name="McDonald S."/>
            <person name="McLean J."/>
            <person name="Mooney P."/>
            <person name="Moule S."/>
            <person name="Mungall K.L."/>
            <person name="Murphy L.D."/>
            <person name="Niblett D."/>
            <person name="Odell C."/>
            <person name="Oliver K."/>
            <person name="O'Neil S."/>
            <person name="Pearson D."/>
            <person name="Quail M.A."/>
            <person name="Rabbinowitsch E."/>
            <person name="Rutherford K.M."/>
            <person name="Rutter S."/>
            <person name="Saunders D."/>
            <person name="Seeger K."/>
            <person name="Sharp S."/>
            <person name="Skelton J."/>
            <person name="Simmonds M.N."/>
            <person name="Squares R."/>
            <person name="Squares S."/>
            <person name="Stevens K."/>
            <person name="Taylor K."/>
            <person name="Taylor R.G."/>
            <person name="Tivey A."/>
            <person name="Walsh S.V."/>
            <person name="Warren T."/>
            <person name="Whitehead S."/>
            <person name="Woodward J.R."/>
            <person name="Volckaert G."/>
            <person name="Aert R."/>
            <person name="Robben J."/>
            <person name="Grymonprez B."/>
            <person name="Weltjens I."/>
            <person name="Vanstreels E."/>
            <person name="Rieger M."/>
            <person name="Schaefer M."/>
            <person name="Mueller-Auer S."/>
            <person name="Gabel C."/>
            <person name="Fuchs M."/>
            <person name="Duesterhoeft A."/>
            <person name="Fritzc C."/>
            <person name="Holzer E."/>
            <person name="Moestl D."/>
            <person name="Hilbert H."/>
            <person name="Borzym K."/>
            <person name="Langer I."/>
            <person name="Beck A."/>
            <person name="Lehrach H."/>
            <person name="Reinhardt R."/>
            <person name="Pohl T.M."/>
            <person name="Eger P."/>
            <person name="Zimmermann W."/>
            <person name="Wedler H."/>
            <person name="Wambutt R."/>
            <person name="Purnelle B."/>
            <person name="Goffeau A."/>
            <person name="Cadieu E."/>
            <person name="Dreano S."/>
            <person name="Gloux S."/>
            <person name="Lelaure V."/>
            <person name="Mottier S."/>
            <person name="Galibert F."/>
            <person name="Aves S.J."/>
            <person name="Xiang Z."/>
            <person name="Hunt C."/>
            <person name="Moore K."/>
            <person name="Hurst S.M."/>
            <person name="Lucas M."/>
            <person name="Rochet M."/>
            <person name="Gaillardin C."/>
            <person name="Tallada V.A."/>
            <person name="Garzon A."/>
            <person name="Thode G."/>
            <person name="Daga R.R."/>
            <person name="Cruzado L."/>
            <person name="Jimenez J."/>
            <person name="Sanchez M."/>
            <person name="del Rey F."/>
            <person name="Benito J."/>
            <person name="Dominguez A."/>
            <person name="Revuelta J.L."/>
            <person name="Moreno S."/>
            <person name="Armstrong J."/>
            <person name="Forsburg S.L."/>
            <person name="Cerutti L."/>
            <person name="Lowe T."/>
            <person name="McCombie W.R."/>
            <person name="Paulsen I."/>
            <person name="Potashkin J."/>
            <person name="Shpakovski G.V."/>
            <person name="Ussery D."/>
            <person name="Barrell B.G."/>
            <person name="Nurse P."/>
        </authorList>
    </citation>
    <scope>NUCLEOTIDE SEQUENCE [LARGE SCALE GENOMIC DNA]</scope>
    <source>
        <strain>972 / ATCC 24843</strain>
    </source>
</reference>
<reference key="2">
    <citation type="journal article" date="2005" name="Curr. Biol.">
        <title>A large-scale screen in S. pombe identifies seven novel genes required for critical meiotic events.</title>
        <authorList>
            <person name="Martin-Castellanos C."/>
            <person name="Blanco M."/>
            <person name="Rozalen A.E."/>
            <person name="Perez-Hidalgo L."/>
            <person name="Garcia A.I."/>
            <person name="Conde F."/>
            <person name="Mata J."/>
            <person name="Ellermeier C."/>
            <person name="Davis L."/>
            <person name="San-Segundo P."/>
            <person name="Smith G.R."/>
            <person name="Moreno S."/>
        </authorList>
    </citation>
    <scope>FUNCTION IN MEIOSIS</scope>
</reference>
<reference key="3">
    <citation type="journal article" date="2006" name="Nat. Biotechnol.">
        <title>ORFeome cloning and global analysis of protein localization in the fission yeast Schizosaccharomyces pombe.</title>
        <authorList>
            <person name="Matsuyama A."/>
            <person name="Arai R."/>
            <person name="Yashiroda Y."/>
            <person name="Shirai A."/>
            <person name="Kamata A."/>
            <person name="Sekido S."/>
            <person name="Kobayashi Y."/>
            <person name="Hashimoto A."/>
            <person name="Hamamoto M."/>
            <person name="Hiraoka Y."/>
            <person name="Horinouchi S."/>
            <person name="Yoshida M."/>
        </authorList>
    </citation>
    <scope>SUBCELLULAR LOCATION [LARGE SCALE ANALYSIS]</scope>
</reference>
<reference key="4">
    <citation type="journal article" date="2008" name="J. Proteome Res.">
        <title>Phosphoproteome analysis of fission yeast.</title>
        <authorList>
            <person name="Wilson-Grady J.T."/>
            <person name="Villen J."/>
            <person name="Gygi S.P."/>
        </authorList>
    </citation>
    <scope>PHOSPHORYLATION [LARGE SCALE ANALYSIS] AT SER-127; SER-128; THR-132 AND SER-141</scope>
    <scope>IDENTIFICATION BY MASS SPECTROMETRY</scope>
</reference>
<evidence type="ECO:0000256" key="1">
    <source>
        <dbReference type="SAM" id="MobiDB-lite"/>
    </source>
</evidence>
<evidence type="ECO:0000269" key="2">
    <source>
    </source>
</evidence>
<evidence type="ECO:0000269" key="3">
    <source>
    </source>
</evidence>
<evidence type="ECO:0000269" key="4">
    <source>
    </source>
</evidence>
<feature type="chain" id="PRO_0000116743" description="Meiotically up-regulated gene 35 protein">
    <location>
        <begin position="1"/>
        <end position="234"/>
    </location>
</feature>
<feature type="region of interest" description="Disordered" evidence="1">
    <location>
        <begin position="126"/>
        <end position="176"/>
    </location>
</feature>
<feature type="compositionally biased region" description="Basic and acidic residues" evidence="1">
    <location>
        <begin position="126"/>
        <end position="156"/>
    </location>
</feature>
<feature type="modified residue" description="Phosphoserine" evidence="4">
    <location>
        <position position="127"/>
    </location>
</feature>
<feature type="modified residue" description="Phosphoserine" evidence="4">
    <location>
        <position position="128"/>
    </location>
</feature>
<feature type="modified residue" description="Phosphothreonine" evidence="4">
    <location>
        <position position="132"/>
    </location>
</feature>
<feature type="modified residue" description="Phosphoserine" evidence="4">
    <location>
        <position position="141"/>
    </location>
</feature>
<name>MUG35_SCHPO</name>
<proteinExistence type="evidence at protein level"/>
<comment type="function">
    <text evidence="2">Has a role in meiosis.</text>
</comment>
<comment type="subcellular location">
    <subcellularLocation>
        <location evidence="3">Cytoplasm</location>
    </subcellularLocation>
</comment>
<dbReference type="EMBL" id="CU329670">
    <property type="protein sequence ID" value="CAB72238.2"/>
    <property type="molecule type" value="Genomic_DNA"/>
</dbReference>
<dbReference type="RefSeq" id="NP_593113.2">
    <property type="nucleotide sequence ID" value="NM_001018510.2"/>
</dbReference>
<dbReference type="BioGRID" id="278217">
    <property type="interactions" value="9"/>
</dbReference>
<dbReference type="STRING" id="284812.O94435"/>
<dbReference type="iPTMnet" id="O94435"/>
<dbReference type="PaxDb" id="4896-SPAC22H12.01c.1"/>
<dbReference type="EnsemblFungi" id="SPAC22H12.01c.1">
    <property type="protein sequence ID" value="SPAC22H12.01c.1:pep"/>
    <property type="gene ID" value="SPAC22H12.01c"/>
</dbReference>
<dbReference type="GeneID" id="2541723"/>
<dbReference type="KEGG" id="spo:2541723"/>
<dbReference type="PomBase" id="SPAC22H12.01c">
    <property type="gene designation" value="mug35"/>
</dbReference>
<dbReference type="VEuPathDB" id="FungiDB:SPAC22H12.01c"/>
<dbReference type="HOGENOM" id="CLU_1166426_0_0_1"/>
<dbReference type="InParanoid" id="O94435"/>
<dbReference type="OMA" id="LEEKAYW"/>
<dbReference type="PRO" id="PR:O94435"/>
<dbReference type="Proteomes" id="UP000002485">
    <property type="component" value="Chromosome I"/>
</dbReference>
<dbReference type="GO" id="GO:0005829">
    <property type="term" value="C:cytosol"/>
    <property type="evidence" value="ECO:0007005"/>
    <property type="project" value="PomBase"/>
</dbReference>
<dbReference type="GO" id="GO:0051321">
    <property type="term" value="P:meiotic cell cycle"/>
    <property type="evidence" value="ECO:0007669"/>
    <property type="project" value="UniProtKB-KW"/>
</dbReference>
<keyword id="KW-0963">Cytoplasm</keyword>
<keyword id="KW-0469">Meiosis</keyword>
<keyword id="KW-0597">Phosphoprotein</keyword>
<keyword id="KW-1185">Reference proteome</keyword>